<protein>
    <recommendedName>
        <fullName evidence="1">DNA-directed RNA polymerase subunit Rpo10</fullName>
        <ecNumber evidence="1">2.7.7.6</ecNumber>
    </recommendedName>
    <alternativeName>
        <fullName evidence="1">DNA-directed RNA polymerase subunit N</fullName>
    </alternativeName>
</protein>
<organism>
    <name type="scientific">Archaeoglobus fulgidus (strain ATCC 49558 / DSM 4304 / JCM 9628 / NBRC 100126 / VC-16)</name>
    <dbReference type="NCBI Taxonomy" id="224325"/>
    <lineage>
        <taxon>Archaea</taxon>
        <taxon>Methanobacteriati</taxon>
        <taxon>Methanobacteriota</taxon>
        <taxon>Archaeoglobi</taxon>
        <taxon>Archaeoglobales</taxon>
        <taxon>Archaeoglobaceae</taxon>
        <taxon>Archaeoglobus</taxon>
    </lineage>
</organism>
<gene>
    <name evidence="1" type="primary">rpo10</name>
    <name evidence="1" type="synonym">rpoN</name>
    <name type="ordered locus">AF_1130</name>
</gene>
<comment type="function">
    <text evidence="1">DNA-dependent RNA polymerase (RNAP) catalyzes the transcription of DNA into RNA using the four ribonucleoside triphosphates as substrates.</text>
</comment>
<comment type="catalytic activity">
    <reaction evidence="1">
        <text>RNA(n) + a ribonucleoside 5'-triphosphate = RNA(n+1) + diphosphate</text>
        <dbReference type="Rhea" id="RHEA:21248"/>
        <dbReference type="Rhea" id="RHEA-COMP:14527"/>
        <dbReference type="Rhea" id="RHEA-COMP:17342"/>
        <dbReference type="ChEBI" id="CHEBI:33019"/>
        <dbReference type="ChEBI" id="CHEBI:61557"/>
        <dbReference type="ChEBI" id="CHEBI:140395"/>
        <dbReference type="EC" id="2.7.7.6"/>
    </reaction>
</comment>
<comment type="cofactor">
    <cofactor evidence="1">
        <name>Zn(2+)</name>
        <dbReference type="ChEBI" id="CHEBI:29105"/>
    </cofactor>
    <text evidence="1">Binds 1 zinc ion.</text>
</comment>
<comment type="subunit">
    <text evidence="1">Part of the RNA polymerase complex.</text>
</comment>
<comment type="subcellular location">
    <subcellularLocation>
        <location evidence="1">Cytoplasm</location>
    </subcellularLocation>
</comment>
<comment type="similarity">
    <text evidence="1">Belongs to the archaeal Rpo10/eukaryotic RPB10 RNA polymerase subunit family.</text>
</comment>
<accession>O29135</accession>
<evidence type="ECO:0000255" key="1">
    <source>
        <dbReference type="HAMAP-Rule" id="MF_00250"/>
    </source>
</evidence>
<keyword id="KW-0963">Cytoplasm</keyword>
<keyword id="KW-0240">DNA-directed RNA polymerase</keyword>
<keyword id="KW-0479">Metal-binding</keyword>
<keyword id="KW-0548">Nucleotidyltransferase</keyword>
<keyword id="KW-1185">Reference proteome</keyword>
<keyword id="KW-0804">Transcription</keyword>
<keyword id="KW-0808">Transferase</keyword>
<keyword id="KW-0862">Zinc</keyword>
<dbReference type="EC" id="2.7.7.6" evidence="1"/>
<dbReference type="EMBL" id="AE000782">
    <property type="protein sequence ID" value="AAB90120.1"/>
    <property type="molecule type" value="Genomic_DNA"/>
</dbReference>
<dbReference type="PIR" id="A69391">
    <property type="entry name" value="A69391"/>
</dbReference>
<dbReference type="SMR" id="O29135"/>
<dbReference type="STRING" id="224325.AF_1130"/>
<dbReference type="PaxDb" id="224325-AF_1130"/>
<dbReference type="EnsemblBacteria" id="AAB90120">
    <property type="protein sequence ID" value="AAB90120"/>
    <property type="gene ID" value="AF_1130"/>
</dbReference>
<dbReference type="KEGG" id="afu:AF_1130"/>
<dbReference type="eggNOG" id="arCOG04244">
    <property type="taxonomic scope" value="Archaea"/>
</dbReference>
<dbReference type="HOGENOM" id="CLU_143122_2_1_2"/>
<dbReference type="OrthoDB" id="371754at2157"/>
<dbReference type="PhylomeDB" id="O29135"/>
<dbReference type="Proteomes" id="UP000002199">
    <property type="component" value="Chromosome"/>
</dbReference>
<dbReference type="GO" id="GO:0005737">
    <property type="term" value="C:cytoplasm"/>
    <property type="evidence" value="ECO:0007669"/>
    <property type="project" value="UniProtKB-SubCell"/>
</dbReference>
<dbReference type="GO" id="GO:0000428">
    <property type="term" value="C:DNA-directed RNA polymerase complex"/>
    <property type="evidence" value="ECO:0007669"/>
    <property type="project" value="UniProtKB-KW"/>
</dbReference>
<dbReference type="GO" id="GO:0003677">
    <property type="term" value="F:DNA binding"/>
    <property type="evidence" value="ECO:0007669"/>
    <property type="project" value="InterPro"/>
</dbReference>
<dbReference type="GO" id="GO:0003899">
    <property type="term" value="F:DNA-directed RNA polymerase activity"/>
    <property type="evidence" value="ECO:0007669"/>
    <property type="project" value="UniProtKB-UniRule"/>
</dbReference>
<dbReference type="GO" id="GO:0008270">
    <property type="term" value="F:zinc ion binding"/>
    <property type="evidence" value="ECO:0007669"/>
    <property type="project" value="UniProtKB-UniRule"/>
</dbReference>
<dbReference type="GO" id="GO:0006351">
    <property type="term" value="P:DNA-templated transcription"/>
    <property type="evidence" value="ECO:0007669"/>
    <property type="project" value="UniProtKB-UniRule"/>
</dbReference>
<dbReference type="Gene3D" id="1.10.10.60">
    <property type="entry name" value="Homeodomain-like"/>
    <property type="match status" value="1"/>
</dbReference>
<dbReference type="HAMAP" id="MF_00250">
    <property type="entry name" value="RNApol_arch_Rpo10"/>
    <property type="match status" value="1"/>
</dbReference>
<dbReference type="InterPro" id="IPR023580">
    <property type="entry name" value="RNA_pol_su_RPB10"/>
</dbReference>
<dbReference type="InterPro" id="IPR020789">
    <property type="entry name" value="RNA_pol_suN_Zn-BS"/>
</dbReference>
<dbReference type="InterPro" id="IPR000268">
    <property type="entry name" value="RPABC5/Rpb10"/>
</dbReference>
<dbReference type="NCBIfam" id="NF003089">
    <property type="entry name" value="PRK04016.1"/>
    <property type="match status" value="1"/>
</dbReference>
<dbReference type="PANTHER" id="PTHR23431:SF3">
    <property type="entry name" value="DNA-DIRECTED RNA POLYMERASES I, II, AND III SUBUNIT RPABC5"/>
    <property type="match status" value="1"/>
</dbReference>
<dbReference type="PANTHER" id="PTHR23431">
    <property type="entry name" value="DNA-DIRECTED RNA POLYMERASES I, II, AND III SUBUNIT RPABC5 FAMILY MEMBER"/>
    <property type="match status" value="1"/>
</dbReference>
<dbReference type="Pfam" id="PF01194">
    <property type="entry name" value="RNA_pol_N"/>
    <property type="match status" value="1"/>
</dbReference>
<dbReference type="PIRSF" id="PIRSF005653">
    <property type="entry name" value="RNA_pol_N/8_sub"/>
    <property type="match status" value="1"/>
</dbReference>
<dbReference type="SUPFAM" id="SSF46924">
    <property type="entry name" value="RNA polymerase subunit RPB10"/>
    <property type="match status" value="1"/>
</dbReference>
<dbReference type="PROSITE" id="PS01112">
    <property type="entry name" value="RNA_POL_N_8KD"/>
    <property type="match status" value="1"/>
</dbReference>
<reference key="1">
    <citation type="journal article" date="1997" name="Nature">
        <title>The complete genome sequence of the hyperthermophilic, sulphate-reducing archaeon Archaeoglobus fulgidus.</title>
        <authorList>
            <person name="Klenk H.-P."/>
            <person name="Clayton R.A."/>
            <person name="Tomb J.-F."/>
            <person name="White O."/>
            <person name="Nelson K.E."/>
            <person name="Ketchum K.A."/>
            <person name="Dodson R.J."/>
            <person name="Gwinn M.L."/>
            <person name="Hickey E.K."/>
            <person name="Peterson J.D."/>
            <person name="Richardson D.L."/>
            <person name="Kerlavage A.R."/>
            <person name="Graham D.E."/>
            <person name="Kyrpides N.C."/>
            <person name="Fleischmann R.D."/>
            <person name="Quackenbush J."/>
            <person name="Lee N.H."/>
            <person name="Sutton G.G."/>
            <person name="Gill S.R."/>
            <person name="Kirkness E.F."/>
            <person name="Dougherty B.A."/>
            <person name="McKenney K."/>
            <person name="Adams M.D."/>
            <person name="Loftus B.J."/>
            <person name="Peterson S.N."/>
            <person name="Reich C.I."/>
            <person name="McNeil L.K."/>
            <person name="Badger J.H."/>
            <person name="Glodek A."/>
            <person name="Zhou L."/>
            <person name="Overbeek R."/>
            <person name="Gocayne J.D."/>
            <person name="Weidman J.F."/>
            <person name="McDonald L.A."/>
            <person name="Utterback T.R."/>
            <person name="Cotton M.D."/>
            <person name="Spriggs T."/>
            <person name="Artiach P."/>
            <person name="Kaine B.P."/>
            <person name="Sykes S.M."/>
            <person name="Sadow P.W."/>
            <person name="D'Andrea K.P."/>
            <person name="Bowman C."/>
            <person name="Fujii C."/>
            <person name="Garland S.A."/>
            <person name="Mason T.M."/>
            <person name="Olsen G.J."/>
            <person name="Fraser C.M."/>
            <person name="Smith H.O."/>
            <person name="Woese C.R."/>
            <person name="Venter J.C."/>
        </authorList>
    </citation>
    <scope>NUCLEOTIDE SEQUENCE [LARGE SCALE GENOMIC DNA]</scope>
    <source>
        <strain>ATCC 49558 / DSM 4304 / JCM 9628 / NBRC 100126 / VC-16</strain>
    </source>
</reference>
<sequence>MDVPRNENSSDFPIRCFSCGAVIGHLYDEYKQKLSEGKSPKEALDELGIERYCCRRMFITHKSVIKELSRFHGAVG</sequence>
<proteinExistence type="inferred from homology"/>
<feature type="chain" id="PRO_0000121345" description="DNA-directed RNA polymerase subunit Rpo10">
    <location>
        <begin position="1"/>
        <end position="76"/>
    </location>
</feature>
<feature type="binding site" evidence="1">
    <location>
        <position position="16"/>
    </location>
    <ligand>
        <name>Zn(2+)</name>
        <dbReference type="ChEBI" id="CHEBI:29105"/>
    </ligand>
</feature>
<feature type="binding site" evidence="1">
    <location>
        <position position="19"/>
    </location>
    <ligand>
        <name>Zn(2+)</name>
        <dbReference type="ChEBI" id="CHEBI:29105"/>
    </ligand>
</feature>
<feature type="binding site" evidence="1">
    <location>
        <position position="53"/>
    </location>
    <ligand>
        <name>Zn(2+)</name>
        <dbReference type="ChEBI" id="CHEBI:29105"/>
    </ligand>
</feature>
<feature type="binding site" evidence="1">
    <location>
        <position position="54"/>
    </location>
    <ligand>
        <name>Zn(2+)</name>
        <dbReference type="ChEBI" id="CHEBI:29105"/>
    </ligand>
</feature>
<name>RPO10_ARCFU</name>